<gene>
    <name evidence="17" type="primary">BOK</name>
    <name type="synonym">BCL2L9</name>
</gene>
<name>BOK_HUMAN</name>
<comment type="function">
    <molecule>Isoform 1</molecule>
    <text evidence="1 4 8 9 11 12">Apoptosis regulator that functions through different apoptotic signaling pathways (PubMed:15102863, PubMed:20673843, PubMed:27076518). Plays a roles as pro-apoptotic protein that positively regulates intrinsic apoptotic process in a BAX- and BAK1-dependent manner or in a BAX- and BAK1-independent manner (PubMed:15102863, PubMed:27076518). In response to endoplasmic reticulum stress promotes mitochondrial apoptosis through downstream BAX/BAK1 activation and positive regulation of PERK-mediated unfolded protein response (By similarity). Activates apoptosis independently of heterodimerization with survival-promoting BCL2 and BCL2L1 through induction of mitochondrial outer membrane permeabilization, in a BAX- and BAK1-independent manner, in response to inhibition of ERAD-proteasome degradation system, resulting in cytochrome c release (PubMed:27076518). In response to DNA damage, mediates intrinsic apoptotic process in a TP53-dependent manner (PubMed:15102863). Plays a role in granulosa cell apoptosis by CASP3 activation (PubMed:20673843). Plays a roles as anti-apoptotic protein during neuronal apoptotic process, by negatively regulating poly ADP-ribose polymerase-dependent cell death through regulation of neuronal calcium homeostasis and mitochondrial bioenergetics in response to NMDA excitation (By similarity). In addition to its role in apoptosis, may regulate trophoblast cell proliferation during the early stages of placental development, by acting on G1/S transition through regulation of CCNE1 expression (PubMed:19942931). May also play a role as an inducer of autophagy by disrupting interaction between MCL1 and BECN1 (PubMed:24113155).</text>
</comment>
<comment type="function">
    <molecule>Isoform 2</molecule>
    <text evidence="5">Pro-apoptotic molecule exerting its function through the mitochondrial pathway.</text>
</comment>
<comment type="subunit">
    <text evidence="1 2 6 7 10">Monomer; positively regulates apoptotic process. Homodimer (By similarity). Heterodimer (By similarity). Oligomer; promoted by apoptotic stimuli and BH3-only proteins; mediates constitutive activation (PubMed:15868100). Interacts (via BH4 domain) with ITPR1; enhances BOK expression and stabilization; limits apoptosis and prevents ubiquitination and then degradation; protects ITPR1 from proteolysis by CASP3 during apoptosis (PubMed:23884412). Interacts with ITPR2 and ITPR3; binds most strongly to ITPR2, and barely to ITPR3; regulates their expression (By similarity). Interacts with XPO1; translocates to the cytoplasm (PubMed:16302269). Interacts with BNIP3; promotes oligomerization (PubMed:15868100).</text>
</comment>
<comment type="interaction">
    <interactant intactId="EBI-7105206">
        <id>Q9UMX3</id>
    </interactant>
    <interactant intactId="EBI-11954292">
        <id>Q86V38</id>
        <label>ATN1</label>
    </interactant>
    <organismsDiffer>false</organismsDiffer>
    <experiments>3</experiments>
</comment>
<comment type="interaction">
    <interactant intactId="EBI-7105206">
        <id>Q9UMX3</id>
    </interactant>
    <interactant intactId="EBI-948169">
        <id>P13637</id>
        <label>ATP1A3</label>
    </interactant>
    <organismsDiffer>false</organismsDiffer>
    <experiments>3</experiments>
</comment>
<comment type="interaction">
    <interactant intactId="EBI-7105206">
        <id>Q9UMX3</id>
    </interactant>
    <interactant intactId="EBI-10968534">
        <id>P50570-2</id>
        <label>DNM2</label>
    </interactant>
    <organismsDiffer>false</organismsDiffer>
    <experiments>3</experiments>
</comment>
<comment type="interaction">
    <interactant intactId="EBI-7105206">
        <id>Q9UMX3</id>
    </interactant>
    <interactant intactId="EBI-11110431">
        <id>Q8TB36</id>
        <label>GDAP1</label>
    </interactant>
    <organismsDiffer>false</organismsDiffer>
    <experiments>3</experiments>
</comment>
<comment type="interaction">
    <interactant intactId="EBI-7105206">
        <id>Q9UMX3</id>
    </interactant>
    <interactant intactId="EBI-352528">
        <id>P10809</id>
        <label>HSPD1</label>
    </interactant>
    <organismsDiffer>false</organismsDiffer>
    <experiments>3</experiments>
</comment>
<comment type="interaction">
    <interactant intactId="EBI-7105206">
        <id>Q9UMX3</id>
    </interactant>
    <interactant intactId="EBI-716404">
        <id>P16284</id>
        <label>PECAM1</label>
    </interactant>
    <organismsDiffer>false</organismsDiffer>
    <experiments>3</experiments>
</comment>
<comment type="subcellular location">
    <molecule>Isoform 1</molecule>
    <subcellularLocation>
        <location evidence="1">Mitochondrion membrane</location>
        <topology evidence="1">Single-pass membrane protein</topology>
    </subcellularLocation>
    <subcellularLocation>
        <location evidence="12">Endoplasmic reticulum membrane</location>
        <topology evidence="1">Single-pass membrane protein</topology>
    </subcellularLocation>
    <subcellularLocation>
        <location evidence="11">Mitochondrion inner membrane</location>
    </subcellularLocation>
    <subcellularLocation>
        <location evidence="6 7 8 9 11">Cytoplasm</location>
    </subcellularLocation>
    <subcellularLocation>
        <location evidence="7 8 9">Nucleus</location>
    </subcellularLocation>
    <subcellularLocation>
        <location evidence="4 6 8 12">Mitochondrion</location>
    </subcellularLocation>
    <subcellularLocation>
        <location evidence="7">Endoplasmic reticulum</location>
    </subcellularLocation>
    <subcellularLocation>
        <location evidence="12">Mitochondrion outer membrane</location>
    </subcellularLocation>
    <subcellularLocation>
        <location evidence="1">Early endosome membrane</location>
    </subcellularLocation>
    <subcellularLocation>
        <location evidence="1">Recycling endosome membrane</location>
    </subcellularLocation>
    <subcellularLocation>
        <location evidence="1">Nucleus outer membrane</location>
    </subcellularLocation>
    <subcellularLocation>
        <location evidence="1">Golgi apparatus</location>
        <location evidence="1">cis-Golgi network membrane</location>
    </subcellularLocation>
    <subcellularLocation>
        <location evidence="1">Golgi apparatus</location>
        <location evidence="1">trans-Golgi network membrane</location>
    </subcellularLocation>
    <subcellularLocation>
        <location evidence="8">Membrane</location>
    </subcellularLocation>
    <text evidence="1 6 8">Nuclear and cytoplasmic compartments in the early stages of apoptosis and during apoptosis it associates with mitochondria (PubMed:19942931). In healthy cells, associates loosely with the membrane in a hit-and-run mode. The insertion and accumulation on membranes is enhanced through the activity of death signals, resulting in the integration of the membrane-bound protein into the membrane (PubMed:15868100). The transmembrane domain controls subcellular localization; constitutes a tail-anchor. Localizes in early and late endosome upon blocking of apoptosis. Must localize to the mitochondria to induce mitochondrial outer membrane permeabilization and apoptosis (By similarity).</text>
</comment>
<comment type="subcellular location">
    <molecule>Isoform 2</molecule>
    <subcellularLocation>
        <location evidence="8">Membrane</location>
    </subcellularLocation>
    <subcellularLocation>
        <location evidence="8">Cytoplasm</location>
    </subcellularLocation>
</comment>
<comment type="alternative products">
    <event type="alternative splicing"/>
    <isoform>
        <id>Q9UMX3-1</id>
        <name>1</name>
        <name evidence="14">Mtd-L</name>
        <sequence type="displayed"/>
    </isoform>
    <isoform>
        <id>Q9UMX3-2</id>
        <name>2</name>
        <name evidence="14">Mtd-P</name>
        <sequence type="described" ref="VSP_058599"/>
    </isoform>
</comment>
<comment type="tissue specificity">
    <text evidence="9">Expressed mainly in oocytes; weak expression in granulosa cells of the developing follicles. In adult human ovaries, expressed in granulosa cells at all follicular stages, but expression in primordial/primary follicles granulosa cell is stronger than in secondary and antral follicles.</text>
</comment>
<comment type="developmental stage">
    <text evidence="5 8">Isoform 1: at 5-7 weeks of gestation, detected primarily in the cytotrophoblast layer. By 10-13 weeks, expression becomes restricted primarily to the apical border of the syncytiotrophoblast (PubMed:19942931). Isoform 2: expression significantly increased around 6-8 weeks (PubMed:15775999).</text>
</comment>
<comment type="induction">
    <text evidence="4">Up-regulated by DNA damage.</text>
</comment>
<comment type="domain">
    <text evidence="1">BH4 domain mediates interaction with ITPR1.</text>
</comment>
<comment type="PTM">
    <text evidence="1">Ubiquitinated by AMFR/gp78 E3 ubiquitin ligase complex; mediates degradation by ubiquitin-proteasome pathway in a VCP/p97-dependent manner; prevents from pro-apoptotic activity; promotes degradation of newly synthesized proteins that are not ITPR1 associated.</text>
</comment>
<comment type="similarity">
    <text evidence="16">Belongs to the Bcl-2 family.</text>
</comment>
<comment type="online information" name="Atlas of Genetics and Cytogenetics in Oncology and Haematology">
    <link uri="https://atlasgeneticsoncology.org/gene/824/BOK"/>
</comment>
<reference key="1">
    <citation type="journal article" date="2000" name="FEBS Lett.">
        <title>Evolutionarily conserved Bok proteins in the Bcl-2 family.</title>
        <authorList>
            <person name="Zhang H."/>
            <person name="Holzgreve W."/>
            <person name="De Geyter C."/>
        </authorList>
    </citation>
    <scope>NUCLEOTIDE SEQUENCE [MRNA]</scope>
</reference>
<reference key="2">
    <citation type="journal article" date="2005" name="Cell Death Differ.">
        <title>A novel Mtd splice isoform is responsible for trophoblast cell death in pre-eclampsia.</title>
        <authorList>
            <person name="Soleymanlou N."/>
            <person name="Wu Y."/>
            <person name="Wang J.X."/>
            <person name="Todros T."/>
            <person name="Ietta F."/>
            <person name="Jurisicova A."/>
            <person name="Post M."/>
            <person name="Caniggia I."/>
        </authorList>
    </citation>
    <scope>NUCLEOTIDE SEQUENCE [MRNA] (ISOFORM 2)</scope>
    <scope>DEVELOPMENTAL STAGE</scope>
    <scope>FUNCTION (ISOFORM 2)</scope>
</reference>
<reference key="3">
    <citation type="submission" date="2003-05" db="EMBL/GenBank/DDBJ databases">
        <title>Cloning of human full-length CDSs in BD Creator(TM) system donor vector.</title>
        <authorList>
            <person name="Kalnine N."/>
            <person name="Chen X."/>
            <person name="Rolfs A."/>
            <person name="Halleck A."/>
            <person name="Hines L."/>
            <person name="Eisenstein S."/>
            <person name="Koundinya M."/>
            <person name="Raphael J."/>
            <person name="Moreira D."/>
            <person name="Kelley T."/>
            <person name="LaBaer J."/>
            <person name="Lin Y."/>
            <person name="Phelan M."/>
            <person name="Farmer A."/>
        </authorList>
    </citation>
    <scope>NUCLEOTIDE SEQUENCE [LARGE SCALE MRNA]</scope>
</reference>
<reference key="4">
    <citation type="journal article" date="2004" name="Genome Res.">
        <title>The status, quality, and expansion of the NIH full-length cDNA project: the Mammalian Gene Collection (MGC).</title>
        <authorList>
            <consortium name="The MGC Project Team"/>
        </authorList>
    </citation>
    <scope>NUCLEOTIDE SEQUENCE [LARGE SCALE MRNA]</scope>
    <source>
        <tissue>Muscle</tissue>
    </source>
</reference>
<reference key="5">
    <citation type="journal article" date="1998" name="J. Biol. Chem.">
        <title>Mtd, a novel Bcl-2 family member activates apoptosis in the absence of heterodimerization with Bcl-2 and Bcl-XL.</title>
        <authorList>
            <person name="Inohara N."/>
            <person name="Ekhterae D."/>
            <person name="Garcia I."/>
            <person name="Carrio R."/>
            <person name="Merino J."/>
            <person name="Merry A."/>
            <person name="Chen S."/>
            <person name="Nunez G."/>
        </authorList>
    </citation>
    <scope>TISSUE SPECIFICITY</scope>
</reference>
<reference key="6">
    <citation type="journal article" date="2004" name="J. Biol. Chem.">
        <title>BOK and NOXA are essential mediators of p53-dependent apoptosis.</title>
        <authorList>
            <person name="Yakovlev A.G."/>
            <person name="Di Giovanni S."/>
            <person name="Wang G."/>
            <person name="Liu W."/>
            <person name="Stoica B."/>
            <person name="Faden A.I."/>
        </authorList>
    </citation>
    <scope>SUBCELLULAR LOCATION</scope>
    <scope>FUNCTION</scope>
    <scope>INDUCTION</scope>
</reference>
<reference key="7">
    <citation type="journal article" date="2005" name="Cell. Mol. Life Sci.">
        <title>Membrane translocation and oligomerization of hBok are triggered in response to apoptotic stimuli and Bnip3.</title>
        <authorList>
            <person name="Gao S."/>
            <person name="Fu W."/>
            <person name="Duerrenberger M."/>
            <person name="De Geyter C."/>
            <person name="Zhang H."/>
        </authorList>
    </citation>
    <scope>SUBCELLULAR LOCATION</scope>
    <scope>INTERACTION WITH BNIP3</scope>
</reference>
<reference key="8">
    <citation type="journal article" date="2006" name="Mol. Carcinog.">
        <title>Nuclear translocation of the pro-apoptotic Bcl-2 family member Bok induces apoptosis.</title>
        <authorList>
            <person name="Bartholomeusz G."/>
            <person name="Wu Y."/>
            <person name="Ali Seyed M."/>
            <person name="Xia W."/>
            <person name="Kwong K.Y."/>
            <person name="Hortobagyi G."/>
            <person name="Hung M.C."/>
        </authorList>
    </citation>
    <scope>SUBCELLULAR LOCATION</scope>
    <scope>MUTAGENESIS OF 71-LEU--LEU-73</scope>
    <scope>REGION</scope>
    <scope>INTERACTION WITH XPO1</scope>
</reference>
<reference key="9">
    <citation type="journal article" date="2009" name="Sci. Signal.">
        <title>Quantitative phosphoproteomic analysis of T cell receptor signaling reveals system-wide modulation of protein-protein interactions.</title>
        <authorList>
            <person name="Mayya V."/>
            <person name="Lundgren D.H."/>
            <person name="Hwang S.-I."/>
            <person name="Rezaul K."/>
            <person name="Wu L."/>
            <person name="Eng J.K."/>
            <person name="Rodionov V."/>
            <person name="Han D.K."/>
        </authorList>
    </citation>
    <scope>IDENTIFICATION BY MASS SPECTROMETRY [LARGE SCALE ANALYSIS]</scope>
    <source>
        <tissue>Leukemic T-cell</tissue>
    </source>
</reference>
<reference key="10">
    <citation type="journal article" date="2010" name="Cell Death Differ.">
        <title>Mtd/Bok takes a swing: proapoptotic Mtd/Bok regulates trophoblast cell proliferation during human placental development and in preeclampsia.</title>
        <authorList>
            <person name="Ray J.E."/>
            <person name="Garcia J."/>
            <person name="Jurisicova A."/>
            <person name="Caniggia I."/>
        </authorList>
    </citation>
    <scope>DEVELOPMENTAL STAGE</scope>
    <scope>SUBCELLULAR LOCATION</scope>
    <scope>FUNCTION</scope>
</reference>
<reference key="11">
    <citation type="journal article" date="2010" name="Mol. Cell. Endocrinol.">
        <title>Regulation of cell death in human fetal and adult ovaries--role of Bok and Bcl-X(L).</title>
        <authorList>
            <person name="Jaeaeskelaeinen M."/>
            <person name="Nieminen A."/>
            <person name="Poekkylae R.M."/>
            <person name="Kauppinen M."/>
            <person name="Liakka A."/>
            <person name="Heikinheimo M."/>
            <person name="Vaskivuo T.E."/>
            <person name="Klefstroem J."/>
            <person name="Tapanainen J.S."/>
        </authorList>
    </citation>
    <scope>FUNCTION</scope>
    <scope>SUBCELLULAR LOCATION</scope>
    <scope>TISSUE SPECIFICITY</scope>
</reference>
<reference key="12">
    <citation type="journal article" date="2013" name="Autophagy">
        <title>Placental autophagy regulation by the BOK-MCL1 rheostat.</title>
        <authorList>
            <person name="Kalkat M."/>
            <person name="Garcia J."/>
            <person name="Ebrahimi J."/>
            <person name="Melland-Smith M."/>
            <person name="Todros T."/>
            <person name="Post M."/>
            <person name="Caniggia I."/>
        </authorList>
    </citation>
    <scope>FUNCTION</scope>
    <scope>SUBCELLULAR LOCATION</scope>
</reference>
<reference key="13">
    <citation type="journal article" date="2013" name="J. Biol. Chem.">
        <title>The Bcl-2 protein family member Bok binds to the coupling domain of inositol 1,4,5-trisphosphate receptors and protects them from proteolytic cleavage.</title>
        <authorList>
            <person name="Schulman J.J."/>
            <person name="Wright F.A."/>
            <person name="Kaufmann T."/>
            <person name="Wojcikiewicz R.J."/>
        </authorList>
    </citation>
    <scope>INTERACTION WITH ITPR1</scope>
</reference>
<reference key="14">
    <citation type="journal article" date="2016" name="J. Cell Sci.">
        <title>Bok is a genuine multi-BH-domain protein that triggers apoptosis in the absence of Bax and Bak.</title>
        <authorList>
            <person name="Einsele-Scholz S."/>
            <person name="Malmsheimer S."/>
            <person name="Bertram K."/>
            <person name="Stehle D."/>
            <person name="Johaenning J."/>
            <person name="Manz M."/>
            <person name="Daniel P.T."/>
            <person name="Gillissen B.F."/>
            <person name="Schulze-Osthoff K."/>
            <person name="Essmann F."/>
        </authorList>
    </citation>
    <scope>FUNCTION</scope>
    <scope>SUBCELLULAR LOCATION</scope>
</reference>
<evidence type="ECO:0000250" key="1">
    <source>
        <dbReference type="UniProtKB" id="O35425"/>
    </source>
</evidence>
<evidence type="ECO:0000250" key="2">
    <source>
        <dbReference type="UniProtKB" id="Q792S6"/>
    </source>
</evidence>
<evidence type="ECO:0000255" key="3"/>
<evidence type="ECO:0000269" key="4">
    <source>
    </source>
</evidence>
<evidence type="ECO:0000269" key="5">
    <source>
    </source>
</evidence>
<evidence type="ECO:0000269" key="6">
    <source>
    </source>
</evidence>
<evidence type="ECO:0000269" key="7">
    <source>
    </source>
</evidence>
<evidence type="ECO:0000269" key="8">
    <source>
    </source>
</evidence>
<evidence type="ECO:0000269" key="9">
    <source>
    </source>
</evidence>
<evidence type="ECO:0000269" key="10">
    <source>
    </source>
</evidence>
<evidence type="ECO:0000269" key="11">
    <source>
    </source>
</evidence>
<evidence type="ECO:0000269" key="12">
    <source>
    </source>
</evidence>
<evidence type="ECO:0000303" key="13">
    <source>
    </source>
</evidence>
<evidence type="ECO:0000303" key="14">
    <source>
    </source>
</evidence>
<evidence type="ECO:0000303" key="15">
    <source>
    </source>
</evidence>
<evidence type="ECO:0000305" key="16"/>
<evidence type="ECO:0000312" key="17">
    <source>
        <dbReference type="HGNC" id="HGNC:1087"/>
    </source>
</evidence>
<evidence type="ECO:0007829" key="18">
    <source>
        <dbReference type="PDB" id="6CKV"/>
    </source>
</evidence>
<protein>
    <recommendedName>
        <fullName evidence="13">Bcl-2-related ovarian killer protein</fullName>
        <shortName evidence="15">hBOK</shortName>
    </recommendedName>
    <alternativeName>
        <fullName>Bcl-2-like protein 9</fullName>
        <shortName>Bcl2-L-9</shortName>
    </alternativeName>
</protein>
<keyword id="KW-0002">3D-structure</keyword>
<keyword id="KW-0025">Alternative splicing</keyword>
<keyword id="KW-0053">Apoptosis</keyword>
<keyword id="KW-0963">Cytoplasm</keyword>
<keyword id="KW-0256">Endoplasmic reticulum</keyword>
<keyword id="KW-0967">Endosome</keyword>
<keyword id="KW-0333">Golgi apparatus</keyword>
<keyword id="KW-1017">Isopeptide bond</keyword>
<keyword id="KW-0472">Membrane</keyword>
<keyword id="KW-0496">Mitochondrion</keyword>
<keyword id="KW-0999">Mitochondrion inner membrane</keyword>
<keyword id="KW-1000">Mitochondrion outer membrane</keyword>
<keyword id="KW-0539">Nucleus</keyword>
<keyword id="KW-0597">Phosphoprotein</keyword>
<keyword id="KW-1267">Proteomics identification</keyword>
<keyword id="KW-1185">Reference proteome</keyword>
<keyword id="KW-0812">Transmembrane</keyword>
<keyword id="KW-1133">Transmembrane helix</keyword>
<keyword id="KW-0832">Ubl conjugation</keyword>
<dbReference type="EMBL" id="AF174487">
    <property type="protein sequence ID" value="AAD51719.1"/>
    <property type="molecule type" value="mRNA"/>
</dbReference>
<dbReference type="EMBL" id="BT007272">
    <property type="protein sequence ID" value="AAP35936.1"/>
    <property type="molecule type" value="mRNA"/>
</dbReference>
<dbReference type="EMBL" id="BC006203">
    <property type="status" value="NOT_ANNOTATED_CDS"/>
    <property type="molecule type" value="mRNA"/>
</dbReference>
<dbReference type="CCDS" id="CCDS2550.1">
    <molecule id="Q9UMX3-1"/>
</dbReference>
<dbReference type="RefSeq" id="NP_115904.1">
    <molecule id="Q9UMX3-1"/>
    <property type="nucleotide sequence ID" value="NM_032515.5"/>
</dbReference>
<dbReference type="RefSeq" id="XP_011509998.1">
    <molecule id="Q9UMX3-1"/>
    <property type="nucleotide sequence ID" value="XM_011511696.3"/>
</dbReference>
<dbReference type="RefSeq" id="XP_047301543.1">
    <molecule id="Q9UMX3-2"/>
    <property type="nucleotide sequence ID" value="XM_047445587.1"/>
</dbReference>
<dbReference type="RefSeq" id="XP_047301544.1">
    <molecule id="Q9UMX3-2"/>
    <property type="nucleotide sequence ID" value="XM_047445588.1"/>
</dbReference>
<dbReference type="RefSeq" id="XP_054199502.1">
    <molecule id="Q9UMX3-1"/>
    <property type="nucleotide sequence ID" value="XM_054343527.1"/>
</dbReference>
<dbReference type="RefSeq" id="XP_054199503.1">
    <molecule id="Q9UMX3-1"/>
    <property type="nucleotide sequence ID" value="XM_054343528.1"/>
</dbReference>
<dbReference type="RefSeq" id="XP_054199504.1">
    <molecule id="Q9UMX3-2"/>
    <property type="nucleotide sequence ID" value="XM_054343529.1"/>
</dbReference>
<dbReference type="RefSeq" id="XP_054199505.1">
    <molecule id="Q9UMX3-2"/>
    <property type="nucleotide sequence ID" value="XM_054343530.1"/>
</dbReference>
<dbReference type="PDB" id="6CKV">
    <property type="method" value="NMR"/>
    <property type="chains" value="A=21-177"/>
</dbReference>
<dbReference type="PDBsum" id="6CKV"/>
<dbReference type="BMRB" id="Q9UMX3"/>
<dbReference type="SMR" id="Q9UMX3"/>
<dbReference type="BioGRID" id="107134">
    <property type="interactions" value="17"/>
</dbReference>
<dbReference type="FunCoup" id="Q9UMX3">
    <property type="interactions" value="231"/>
</dbReference>
<dbReference type="IntAct" id="Q9UMX3">
    <property type="interactions" value="10"/>
</dbReference>
<dbReference type="MINT" id="Q9UMX3"/>
<dbReference type="STRING" id="9606.ENSP00000314132"/>
<dbReference type="TCDB" id="1.A.21.1.7">
    <property type="family name" value="the bcl-2 (bcl-2) family"/>
</dbReference>
<dbReference type="iPTMnet" id="Q9UMX3"/>
<dbReference type="PhosphoSitePlus" id="Q9UMX3"/>
<dbReference type="BioMuta" id="BOK"/>
<dbReference type="DMDM" id="57012554"/>
<dbReference type="jPOST" id="Q9UMX3"/>
<dbReference type="MassIVE" id="Q9UMX3"/>
<dbReference type="PaxDb" id="9606-ENSP00000314132"/>
<dbReference type="PeptideAtlas" id="Q9UMX3"/>
<dbReference type="ProteomicsDB" id="85221"/>
<dbReference type="Pumba" id="Q9UMX3"/>
<dbReference type="Antibodypedia" id="20324">
    <property type="antibodies" value="275 antibodies from 33 providers"/>
</dbReference>
<dbReference type="DNASU" id="666"/>
<dbReference type="Ensembl" id="ENST00000318407.5">
    <molecule id="Q9UMX3-1"/>
    <property type="protein sequence ID" value="ENSP00000314132.3"/>
    <property type="gene ID" value="ENSG00000176720.6"/>
</dbReference>
<dbReference type="GeneID" id="666"/>
<dbReference type="KEGG" id="hsa:666"/>
<dbReference type="MANE-Select" id="ENST00000318407.5">
    <property type="protein sequence ID" value="ENSP00000314132.3"/>
    <property type="RefSeq nucleotide sequence ID" value="NM_032515.5"/>
    <property type="RefSeq protein sequence ID" value="NP_115904.1"/>
</dbReference>
<dbReference type="UCSC" id="uc002wbq.4">
    <molecule id="Q9UMX3-1"/>
    <property type="organism name" value="human"/>
</dbReference>
<dbReference type="AGR" id="HGNC:1087"/>
<dbReference type="CTD" id="666"/>
<dbReference type="DisGeNET" id="666"/>
<dbReference type="GeneCards" id="BOK"/>
<dbReference type="HGNC" id="HGNC:1087">
    <property type="gene designation" value="BOK"/>
</dbReference>
<dbReference type="HPA" id="ENSG00000176720">
    <property type="expression patterns" value="Tissue enhanced (brain, liver)"/>
</dbReference>
<dbReference type="MIM" id="605404">
    <property type="type" value="gene"/>
</dbReference>
<dbReference type="neXtProt" id="NX_Q9UMX3"/>
<dbReference type="OpenTargets" id="ENSG00000176720"/>
<dbReference type="PharmGKB" id="PA25396"/>
<dbReference type="VEuPathDB" id="HostDB:ENSG00000176720"/>
<dbReference type="eggNOG" id="KOG4728">
    <property type="taxonomic scope" value="Eukaryota"/>
</dbReference>
<dbReference type="GeneTree" id="ENSGT01130000278292"/>
<dbReference type="HOGENOM" id="CLU_114994_0_0_1"/>
<dbReference type="InParanoid" id="Q9UMX3"/>
<dbReference type="OMA" id="DMTKCVV"/>
<dbReference type="OrthoDB" id="5947850at2759"/>
<dbReference type="PAN-GO" id="Q9UMX3">
    <property type="GO annotations" value="5 GO annotations based on evolutionary models"/>
</dbReference>
<dbReference type="PhylomeDB" id="Q9UMX3"/>
<dbReference type="TreeFam" id="TF315834"/>
<dbReference type="PathwayCommons" id="Q9UMX3"/>
<dbReference type="SignaLink" id="Q9UMX3"/>
<dbReference type="BioGRID-ORCS" id="666">
    <property type="hits" value="9 hits in 1150 CRISPR screens"/>
</dbReference>
<dbReference type="ChiTaRS" id="BOK">
    <property type="organism name" value="human"/>
</dbReference>
<dbReference type="GeneWiki" id="BOK_(gene)"/>
<dbReference type="GenomeRNAi" id="666"/>
<dbReference type="Pharos" id="Q9UMX3">
    <property type="development level" value="Tbio"/>
</dbReference>
<dbReference type="PRO" id="PR:Q9UMX3"/>
<dbReference type="Proteomes" id="UP000005640">
    <property type="component" value="Chromosome 2"/>
</dbReference>
<dbReference type="RNAct" id="Q9UMX3">
    <property type="molecule type" value="protein"/>
</dbReference>
<dbReference type="Bgee" id="ENSG00000176720">
    <property type="expression patterns" value="Expressed in C1 segment of cervical spinal cord and 166 other cell types or tissues"/>
</dbReference>
<dbReference type="ExpressionAtlas" id="Q9UMX3">
    <property type="expression patterns" value="baseline and differential"/>
</dbReference>
<dbReference type="GO" id="GO:0033106">
    <property type="term" value="C:cis-Golgi network membrane"/>
    <property type="evidence" value="ECO:0000250"/>
    <property type="project" value="UniProtKB"/>
</dbReference>
<dbReference type="GO" id="GO:0005737">
    <property type="term" value="C:cytoplasm"/>
    <property type="evidence" value="ECO:0000314"/>
    <property type="project" value="UniProtKB"/>
</dbReference>
<dbReference type="GO" id="GO:0031901">
    <property type="term" value="C:early endosome membrane"/>
    <property type="evidence" value="ECO:0000250"/>
    <property type="project" value="UniProtKB"/>
</dbReference>
<dbReference type="GO" id="GO:0005783">
    <property type="term" value="C:endoplasmic reticulum"/>
    <property type="evidence" value="ECO:0000314"/>
    <property type="project" value="UniProtKB"/>
</dbReference>
<dbReference type="GO" id="GO:0005789">
    <property type="term" value="C:endoplasmic reticulum membrane"/>
    <property type="evidence" value="ECO:0000314"/>
    <property type="project" value="UniProtKB"/>
</dbReference>
<dbReference type="GO" id="GO:0005794">
    <property type="term" value="C:Golgi apparatus"/>
    <property type="evidence" value="ECO:0000314"/>
    <property type="project" value="UniProtKB"/>
</dbReference>
<dbReference type="GO" id="GO:0016020">
    <property type="term" value="C:membrane"/>
    <property type="evidence" value="ECO:0000314"/>
    <property type="project" value="UniProtKB"/>
</dbReference>
<dbReference type="GO" id="GO:0005743">
    <property type="term" value="C:mitochondrial inner membrane"/>
    <property type="evidence" value="ECO:0000314"/>
    <property type="project" value="UniProtKB"/>
</dbReference>
<dbReference type="GO" id="GO:0031966">
    <property type="term" value="C:mitochondrial membrane"/>
    <property type="evidence" value="ECO:0000314"/>
    <property type="project" value="UniProtKB"/>
</dbReference>
<dbReference type="GO" id="GO:0005741">
    <property type="term" value="C:mitochondrial outer membrane"/>
    <property type="evidence" value="ECO:0000318"/>
    <property type="project" value="GO_Central"/>
</dbReference>
<dbReference type="GO" id="GO:0005739">
    <property type="term" value="C:mitochondrion"/>
    <property type="evidence" value="ECO:0000314"/>
    <property type="project" value="UniProtKB"/>
</dbReference>
<dbReference type="GO" id="GO:0005640">
    <property type="term" value="C:nuclear outer membrane"/>
    <property type="evidence" value="ECO:0007669"/>
    <property type="project" value="UniProtKB-SubCell"/>
</dbReference>
<dbReference type="GO" id="GO:0005634">
    <property type="term" value="C:nucleus"/>
    <property type="evidence" value="ECO:0000314"/>
    <property type="project" value="UniProtKB"/>
</dbReference>
<dbReference type="GO" id="GO:0055038">
    <property type="term" value="C:recycling endosome membrane"/>
    <property type="evidence" value="ECO:0000250"/>
    <property type="project" value="UniProtKB"/>
</dbReference>
<dbReference type="GO" id="GO:0032588">
    <property type="term" value="C:trans-Golgi network membrane"/>
    <property type="evidence" value="ECO:0000250"/>
    <property type="project" value="UniProtKB"/>
</dbReference>
<dbReference type="GO" id="GO:0051400">
    <property type="term" value="F:BH domain binding"/>
    <property type="evidence" value="ECO:0007669"/>
    <property type="project" value="Ensembl"/>
</dbReference>
<dbReference type="GO" id="GO:0015267">
    <property type="term" value="F:channel activity"/>
    <property type="evidence" value="ECO:0000318"/>
    <property type="project" value="GO_Central"/>
</dbReference>
<dbReference type="GO" id="GO:0046982">
    <property type="term" value="F:protein heterodimerization activity"/>
    <property type="evidence" value="ECO:0000250"/>
    <property type="project" value="UniProtKB"/>
</dbReference>
<dbReference type="GO" id="GO:0042803">
    <property type="term" value="F:protein homodimerization activity"/>
    <property type="evidence" value="ECO:0000250"/>
    <property type="project" value="UniProtKB"/>
</dbReference>
<dbReference type="GO" id="GO:0044877">
    <property type="term" value="F:protein-containing complex binding"/>
    <property type="evidence" value="ECO:0007669"/>
    <property type="project" value="Ensembl"/>
</dbReference>
<dbReference type="GO" id="GO:0005102">
    <property type="term" value="F:signaling receptor binding"/>
    <property type="evidence" value="ECO:0007669"/>
    <property type="project" value="Ensembl"/>
</dbReference>
<dbReference type="GO" id="GO:0031625">
    <property type="term" value="F:ubiquitin protein ligase binding"/>
    <property type="evidence" value="ECO:0007669"/>
    <property type="project" value="Ensembl"/>
</dbReference>
<dbReference type="GO" id="GO:0006915">
    <property type="term" value="P:apoptotic process"/>
    <property type="evidence" value="ECO:0000314"/>
    <property type="project" value="UniProtKB"/>
</dbReference>
<dbReference type="GO" id="GO:0006921">
    <property type="term" value="P:cellular component disassembly involved in execution phase of apoptosis"/>
    <property type="evidence" value="ECO:0000250"/>
    <property type="project" value="UniProtKB"/>
</dbReference>
<dbReference type="GO" id="GO:0097192">
    <property type="term" value="P:extrinsic apoptotic signaling pathway in absence of ligand"/>
    <property type="evidence" value="ECO:0000318"/>
    <property type="project" value="GO_Central"/>
</dbReference>
<dbReference type="GO" id="GO:0072332">
    <property type="term" value="P:intrinsic apoptotic signaling pathway by p53 class mediator"/>
    <property type="evidence" value="ECO:0000315"/>
    <property type="project" value="UniProtKB"/>
</dbReference>
<dbReference type="GO" id="GO:0008630">
    <property type="term" value="P:intrinsic apoptotic signaling pathway in response to DNA damage"/>
    <property type="evidence" value="ECO:0000318"/>
    <property type="project" value="GO_Central"/>
</dbReference>
<dbReference type="GO" id="GO:0008584">
    <property type="term" value="P:male gonad development"/>
    <property type="evidence" value="ECO:0007669"/>
    <property type="project" value="Ensembl"/>
</dbReference>
<dbReference type="GO" id="GO:0051902">
    <property type="term" value="P:negative regulation of mitochondrial depolarization"/>
    <property type="evidence" value="ECO:0007669"/>
    <property type="project" value="Ensembl"/>
</dbReference>
<dbReference type="GO" id="GO:1901029">
    <property type="term" value="P:negative regulation of mitochondrial outer membrane permeabilization involved in apoptotic signaling pathway"/>
    <property type="evidence" value="ECO:0007669"/>
    <property type="project" value="Ensembl"/>
</dbReference>
<dbReference type="GO" id="GO:0060546">
    <property type="term" value="P:negative regulation of necroptotic process"/>
    <property type="evidence" value="ECO:0007669"/>
    <property type="project" value="Ensembl"/>
</dbReference>
<dbReference type="GO" id="GO:0043524">
    <property type="term" value="P:negative regulation of neuron apoptotic process"/>
    <property type="evidence" value="ECO:0007669"/>
    <property type="project" value="Ensembl"/>
</dbReference>
<dbReference type="GO" id="GO:0051402">
    <property type="term" value="P:neuron apoptotic process"/>
    <property type="evidence" value="ECO:0007669"/>
    <property type="project" value="Ensembl"/>
</dbReference>
<dbReference type="GO" id="GO:0048709">
    <property type="term" value="P:oligodendrocyte differentiation"/>
    <property type="evidence" value="ECO:0007669"/>
    <property type="project" value="Ensembl"/>
</dbReference>
<dbReference type="GO" id="GO:0043065">
    <property type="term" value="P:positive regulation of apoptotic process"/>
    <property type="evidence" value="ECO:0000314"/>
    <property type="project" value="UniProtKB"/>
</dbReference>
<dbReference type="GO" id="GO:1902237">
    <property type="term" value="P:positive regulation of endoplasmic reticulum stress-induced intrinsic apoptotic signaling pathway"/>
    <property type="evidence" value="ECO:0000250"/>
    <property type="project" value="UniProtKB"/>
</dbReference>
<dbReference type="GO" id="GO:1900119">
    <property type="term" value="P:positive regulation of execution phase of apoptosis"/>
    <property type="evidence" value="ECO:0000315"/>
    <property type="project" value="UniProtKB"/>
</dbReference>
<dbReference type="GO" id="GO:2001244">
    <property type="term" value="P:positive regulation of intrinsic apoptotic signaling pathway"/>
    <property type="evidence" value="ECO:0000250"/>
    <property type="project" value="UniProtKB"/>
</dbReference>
<dbReference type="GO" id="GO:1901030">
    <property type="term" value="P:positive regulation of mitochondrial outer membrane permeabilization involved in apoptotic signaling pathway"/>
    <property type="evidence" value="ECO:0000250"/>
    <property type="project" value="UniProtKB"/>
</dbReference>
<dbReference type="GO" id="GO:1903899">
    <property type="term" value="P:positive regulation of PERK-mediated unfolded protein response"/>
    <property type="evidence" value="ECO:0000250"/>
    <property type="project" value="UniProtKB"/>
</dbReference>
<dbReference type="GO" id="GO:0051259">
    <property type="term" value="P:protein complex oligomerization"/>
    <property type="evidence" value="ECO:0000250"/>
    <property type="project" value="UniProtKB"/>
</dbReference>
<dbReference type="GO" id="GO:0010506">
    <property type="term" value="P:regulation of autophagy"/>
    <property type="evidence" value="ECO:0000315"/>
    <property type="project" value="UniProtKB"/>
</dbReference>
<dbReference type="GO" id="GO:1901382">
    <property type="term" value="P:regulation of chorionic trophoblast cell proliferation"/>
    <property type="evidence" value="ECO:0000314"/>
    <property type="project" value="UniProtKB"/>
</dbReference>
<dbReference type="GO" id="GO:0051480">
    <property type="term" value="P:regulation of cytosolic calcium ion concentration"/>
    <property type="evidence" value="ECO:0007669"/>
    <property type="project" value="Ensembl"/>
</dbReference>
<dbReference type="GO" id="GO:1904708">
    <property type="term" value="P:regulation of granulosa cell apoptotic process"/>
    <property type="evidence" value="ECO:0000315"/>
    <property type="project" value="UniProtKB"/>
</dbReference>
<dbReference type="GO" id="GO:0001836">
    <property type="term" value="P:release of cytochrome c from mitochondria"/>
    <property type="evidence" value="ECO:0000314"/>
    <property type="project" value="UniProtKB"/>
</dbReference>
<dbReference type="GO" id="GO:0072718">
    <property type="term" value="P:response to cisplatin"/>
    <property type="evidence" value="ECO:0007669"/>
    <property type="project" value="Ensembl"/>
</dbReference>
<dbReference type="CDD" id="cd06845">
    <property type="entry name" value="Bcl-2_like"/>
    <property type="match status" value="1"/>
</dbReference>
<dbReference type="FunFam" id="1.10.437.10:FF:000005">
    <property type="entry name" value="bcl-2-related ovarian killer protein"/>
    <property type="match status" value="1"/>
</dbReference>
<dbReference type="Gene3D" id="1.10.437.10">
    <property type="entry name" value="Blc2-like"/>
    <property type="match status" value="1"/>
</dbReference>
<dbReference type="InterPro" id="IPR036834">
    <property type="entry name" value="Bcl-2-like_sf"/>
</dbReference>
<dbReference type="InterPro" id="IPR046371">
    <property type="entry name" value="Bcl-2_BH1-3"/>
</dbReference>
<dbReference type="InterPro" id="IPR026298">
    <property type="entry name" value="Bcl-2_fam"/>
</dbReference>
<dbReference type="InterPro" id="IPR002475">
    <property type="entry name" value="Bcl2-like"/>
</dbReference>
<dbReference type="PANTHER" id="PTHR11256">
    <property type="entry name" value="BCL-2 RELATED"/>
    <property type="match status" value="1"/>
</dbReference>
<dbReference type="PANTHER" id="PTHR11256:SF48">
    <property type="entry name" value="BCL-2-RELATED OVARIAN KILLER PROTEIN"/>
    <property type="match status" value="1"/>
</dbReference>
<dbReference type="Pfam" id="PF00452">
    <property type="entry name" value="Bcl-2"/>
    <property type="match status" value="1"/>
</dbReference>
<dbReference type="PRINTS" id="PR01862">
    <property type="entry name" value="BCL2FAMILY"/>
</dbReference>
<dbReference type="SMART" id="SM00337">
    <property type="entry name" value="BCL"/>
    <property type="match status" value="1"/>
</dbReference>
<dbReference type="SUPFAM" id="SSF56854">
    <property type="entry name" value="Bcl-2 inhibitors of programmed cell death"/>
    <property type="match status" value="1"/>
</dbReference>
<dbReference type="PROSITE" id="PS50062">
    <property type="entry name" value="BCL2_FAMILY"/>
    <property type="match status" value="1"/>
</dbReference>
<sequence length="212" mass="23280">MEVLRRSSVFAAEIMDAFDRSPTDKELVAQAKALGREYVHARLLRAGLSWSAPERAAPVPGRLAEVCAVLLRLGDELEMIRPSVYRNVARQLHISLQSEPVVTDAFLAVAGHIFSAGITWGKVVSLYAVAAGLAVDCVRQAQPAMVHALVDCLGEFVRKTLATWLRRRGGWTDVLKCVVSTDPGLRSHWLVAALCSFGRFLKAAFFVLLPER</sequence>
<organism>
    <name type="scientific">Homo sapiens</name>
    <name type="common">Human</name>
    <dbReference type="NCBI Taxonomy" id="9606"/>
    <lineage>
        <taxon>Eukaryota</taxon>
        <taxon>Metazoa</taxon>
        <taxon>Chordata</taxon>
        <taxon>Craniata</taxon>
        <taxon>Vertebrata</taxon>
        <taxon>Euteleostomi</taxon>
        <taxon>Mammalia</taxon>
        <taxon>Eutheria</taxon>
        <taxon>Euarchontoglires</taxon>
        <taxon>Primates</taxon>
        <taxon>Haplorrhini</taxon>
        <taxon>Catarrhini</taxon>
        <taxon>Hominidae</taxon>
        <taxon>Homo</taxon>
    </lineage>
</organism>
<feature type="chain" id="PRO_0000143086" description="Bcl-2-related ovarian killer protein">
    <location>
        <begin position="1"/>
        <end position="212"/>
    </location>
</feature>
<feature type="transmembrane region" description="Helical" evidence="3">
    <location>
        <begin position="189"/>
        <end position="209"/>
    </location>
</feature>
<feature type="region of interest" description="Interactions with ITPR1" evidence="1">
    <location>
        <begin position="15"/>
        <end position="45"/>
    </location>
</feature>
<feature type="region of interest" description="Nuclear export signal" evidence="7">
    <location>
        <begin position="70"/>
        <end position="78"/>
    </location>
</feature>
<feature type="short sequence motif" description="BH4">
    <location>
        <begin position="32"/>
        <end position="44"/>
    </location>
</feature>
<feature type="short sequence motif" description="BH3">
    <location>
        <begin position="66"/>
        <end position="82"/>
    </location>
</feature>
<feature type="short sequence motif" description="BH1">
    <location>
        <begin position="112"/>
        <end position="131"/>
    </location>
</feature>
<feature type="short sequence motif" description="BH2">
    <location>
        <begin position="164"/>
        <end position="178"/>
    </location>
</feature>
<feature type="modified residue" description="Phosphoserine" evidence="1">
    <location>
        <position position="7"/>
    </location>
</feature>
<feature type="cross-link" description="Glycyl lysine isopeptide (Lys-Gly) (interchain with G-Cter in ubiquitin)" evidence="1">
    <location>
        <position position="25"/>
    </location>
</feature>
<feature type="cross-link" description="Glycyl lysine isopeptide (Lys-Gly) (interchain with G-Cter in ubiquitin)" evidence="1">
    <location>
        <position position="32"/>
    </location>
</feature>
<feature type="cross-link" description="Glycyl lysine isopeptide (Lys-Gly) (interchain with G-Cter in ubiquitin)" evidence="1">
    <location>
        <position position="159"/>
    </location>
</feature>
<feature type="cross-link" description="Glycyl lysine isopeptide (Lys-Gly) (interchain with G-Cter in ubiquitin)" evidence="1">
    <location>
        <position position="176"/>
    </location>
</feature>
<feature type="splice variant" id="VSP_058599" description="In isoform 2.">
    <location>
        <begin position="1"/>
        <end position="78"/>
    </location>
</feature>
<feature type="mutagenesis site" description="Significantly accumulates in the nucleus. Increases apoptotic activity. Does not interact with XPO1." evidence="7">
    <original>LRL</original>
    <variation>AAA</variation>
    <location>
        <begin position="71"/>
        <end position="73"/>
    </location>
</feature>
<feature type="helix" evidence="18">
    <location>
        <begin position="24"/>
        <end position="46"/>
    </location>
</feature>
<feature type="helix" evidence="18">
    <location>
        <begin position="61"/>
        <end position="80"/>
    </location>
</feature>
<feature type="turn" evidence="18">
    <location>
        <begin position="85"/>
        <end position="87"/>
    </location>
</feature>
<feature type="helix" evidence="18">
    <location>
        <begin position="88"/>
        <end position="91"/>
    </location>
</feature>
<feature type="helix" evidence="18">
    <location>
        <begin position="100"/>
        <end position="115"/>
    </location>
</feature>
<feature type="helix" evidence="18">
    <location>
        <begin position="120"/>
        <end position="139"/>
    </location>
</feature>
<feature type="helix" evidence="18">
    <location>
        <begin position="144"/>
        <end position="159"/>
    </location>
</feature>
<feature type="helix" evidence="18">
    <location>
        <begin position="162"/>
        <end position="168"/>
    </location>
</feature>
<feature type="helix" evidence="18">
    <location>
        <begin position="171"/>
        <end position="176"/>
    </location>
</feature>
<accession>Q9UMX3</accession>
<proteinExistence type="evidence at protein level"/>